<sequence length="215" mass="23259">MIPATPFLQATALACERDGRMLFENLDLHLHTGDMLQISGPNGCGKTSLLRLLCGLMQPTAGQILLDAQPLGRQPAAPGRKPLWIGHAPAIKDVLTPLENLSWLSALHQPDGADADTIATALDAVGLAGFEDVPCHTLSAGQQRRVALARLYLPGPPLWLLDEPFTALDRQGIEQLEKHLAEHCEHGGMIVMTTHHSLNRLPAGYRDLDLGQWSA</sequence>
<feature type="chain" id="PRO_0000271942" description="Cytochrome c biogenesis ATP-binding export protein CcmA">
    <location>
        <begin position="1"/>
        <end position="215"/>
    </location>
</feature>
<feature type="domain" description="ABC transporter" evidence="1">
    <location>
        <begin position="8"/>
        <end position="215"/>
    </location>
</feature>
<feature type="binding site" evidence="1">
    <location>
        <begin position="40"/>
        <end position="47"/>
    </location>
    <ligand>
        <name>ATP</name>
        <dbReference type="ChEBI" id="CHEBI:30616"/>
    </ligand>
</feature>
<comment type="function">
    <text evidence="1">Part of the ABC transporter complex CcmAB involved in the biogenesis of c-type cytochromes; once thought to export heme, this seems not to be the case, but its exact role is uncertain. Responsible for energy coupling to the transport system.</text>
</comment>
<comment type="catalytic activity">
    <reaction evidence="1">
        <text>heme b(in) + ATP + H2O = heme b(out) + ADP + phosphate + H(+)</text>
        <dbReference type="Rhea" id="RHEA:19261"/>
        <dbReference type="ChEBI" id="CHEBI:15377"/>
        <dbReference type="ChEBI" id="CHEBI:15378"/>
        <dbReference type="ChEBI" id="CHEBI:30616"/>
        <dbReference type="ChEBI" id="CHEBI:43474"/>
        <dbReference type="ChEBI" id="CHEBI:60344"/>
        <dbReference type="ChEBI" id="CHEBI:456216"/>
        <dbReference type="EC" id="7.6.2.5"/>
    </reaction>
</comment>
<comment type="subunit">
    <text evidence="1">The complex is composed of two ATP-binding proteins (CcmA) and two transmembrane proteins (CcmB).</text>
</comment>
<comment type="subcellular location">
    <subcellularLocation>
        <location evidence="1">Cell inner membrane</location>
        <topology evidence="1">Peripheral membrane protein</topology>
    </subcellularLocation>
</comment>
<comment type="similarity">
    <text evidence="1">Belongs to the ABC transporter superfamily. CcmA exporter (TC 3.A.1.107) family.</text>
</comment>
<reference key="1">
    <citation type="journal article" date="2005" name="Proc. Natl. Acad. Sci. U.S.A.">
        <title>Comparison of the complete genome sequences of Pseudomonas syringae pv. syringae B728a and pv. tomato DC3000.</title>
        <authorList>
            <person name="Feil H."/>
            <person name="Feil W.S."/>
            <person name="Chain P."/>
            <person name="Larimer F."/>
            <person name="Dibartolo G."/>
            <person name="Copeland A."/>
            <person name="Lykidis A."/>
            <person name="Trong S."/>
            <person name="Nolan M."/>
            <person name="Goltsman E."/>
            <person name="Thiel J."/>
            <person name="Malfatti S."/>
            <person name="Loper J.E."/>
            <person name="Lapidus A."/>
            <person name="Detter J.C."/>
            <person name="Land M."/>
            <person name="Richardson P.M."/>
            <person name="Kyrpides N.C."/>
            <person name="Ivanova N."/>
            <person name="Lindow S.E."/>
        </authorList>
    </citation>
    <scope>NUCLEOTIDE SEQUENCE [LARGE SCALE GENOMIC DNA]</scope>
    <source>
        <strain>B728a</strain>
    </source>
</reference>
<proteinExistence type="inferred from homology"/>
<organism>
    <name type="scientific">Pseudomonas syringae pv. syringae (strain B728a)</name>
    <dbReference type="NCBI Taxonomy" id="205918"/>
    <lineage>
        <taxon>Bacteria</taxon>
        <taxon>Pseudomonadati</taxon>
        <taxon>Pseudomonadota</taxon>
        <taxon>Gammaproteobacteria</taxon>
        <taxon>Pseudomonadales</taxon>
        <taxon>Pseudomonadaceae</taxon>
        <taxon>Pseudomonas</taxon>
        <taxon>Pseudomonas syringae</taxon>
    </lineage>
</organism>
<keyword id="KW-0067">ATP-binding</keyword>
<keyword id="KW-0997">Cell inner membrane</keyword>
<keyword id="KW-1003">Cell membrane</keyword>
<keyword id="KW-0201">Cytochrome c-type biogenesis</keyword>
<keyword id="KW-0472">Membrane</keyword>
<keyword id="KW-0547">Nucleotide-binding</keyword>
<keyword id="KW-1278">Translocase</keyword>
<keyword id="KW-0813">Transport</keyword>
<accession>Q4ZQZ7</accession>
<dbReference type="EC" id="7.6.2.5" evidence="1"/>
<dbReference type="EMBL" id="CP000075">
    <property type="protein sequence ID" value="AAY38425.1"/>
    <property type="molecule type" value="Genomic_DNA"/>
</dbReference>
<dbReference type="RefSeq" id="WP_011268406.1">
    <property type="nucleotide sequence ID" value="NC_007005.1"/>
</dbReference>
<dbReference type="RefSeq" id="YP_236463.1">
    <property type="nucleotide sequence ID" value="NC_007005.1"/>
</dbReference>
<dbReference type="SMR" id="Q4ZQZ7"/>
<dbReference type="STRING" id="205918.Psyr_3393"/>
<dbReference type="KEGG" id="psb:Psyr_3393"/>
<dbReference type="PATRIC" id="fig|205918.7.peg.3475"/>
<dbReference type="eggNOG" id="COG4133">
    <property type="taxonomic scope" value="Bacteria"/>
</dbReference>
<dbReference type="HOGENOM" id="CLU_000604_1_2_6"/>
<dbReference type="OrthoDB" id="9800654at2"/>
<dbReference type="Proteomes" id="UP000000426">
    <property type="component" value="Chromosome"/>
</dbReference>
<dbReference type="GO" id="GO:0005886">
    <property type="term" value="C:plasma membrane"/>
    <property type="evidence" value="ECO:0007669"/>
    <property type="project" value="UniProtKB-SubCell"/>
</dbReference>
<dbReference type="GO" id="GO:0015439">
    <property type="term" value="F:ABC-type heme transporter activity"/>
    <property type="evidence" value="ECO:0007669"/>
    <property type="project" value="UniProtKB-EC"/>
</dbReference>
<dbReference type="GO" id="GO:0005524">
    <property type="term" value="F:ATP binding"/>
    <property type="evidence" value="ECO:0007669"/>
    <property type="project" value="UniProtKB-KW"/>
</dbReference>
<dbReference type="GO" id="GO:0016887">
    <property type="term" value="F:ATP hydrolysis activity"/>
    <property type="evidence" value="ECO:0007669"/>
    <property type="project" value="InterPro"/>
</dbReference>
<dbReference type="GO" id="GO:0017004">
    <property type="term" value="P:cytochrome complex assembly"/>
    <property type="evidence" value="ECO:0007669"/>
    <property type="project" value="UniProtKB-KW"/>
</dbReference>
<dbReference type="CDD" id="cd03231">
    <property type="entry name" value="ABC_CcmA_heme_exporter"/>
    <property type="match status" value="1"/>
</dbReference>
<dbReference type="Gene3D" id="3.40.50.300">
    <property type="entry name" value="P-loop containing nucleotide triphosphate hydrolases"/>
    <property type="match status" value="1"/>
</dbReference>
<dbReference type="InterPro" id="IPR003593">
    <property type="entry name" value="AAA+_ATPase"/>
</dbReference>
<dbReference type="InterPro" id="IPR003439">
    <property type="entry name" value="ABC_transporter-like_ATP-bd"/>
</dbReference>
<dbReference type="InterPro" id="IPR017871">
    <property type="entry name" value="ABC_transporter-like_CS"/>
</dbReference>
<dbReference type="InterPro" id="IPR005895">
    <property type="entry name" value="ABC_transptr_haem_export_CcmA"/>
</dbReference>
<dbReference type="InterPro" id="IPR027417">
    <property type="entry name" value="P-loop_NTPase"/>
</dbReference>
<dbReference type="NCBIfam" id="TIGR01189">
    <property type="entry name" value="ccmA"/>
    <property type="match status" value="1"/>
</dbReference>
<dbReference type="NCBIfam" id="NF010061">
    <property type="entry name" value="PRK13538.1"/>
    <property type="match status" value="1"/>
</dbReference>
<dbReference type="PANTHER" id="PTHR43499">
    <property type="entry name" value="ABC TRANSPORTER I FAMILY MEMBER 1"/>
    <property type="match status" value="1"/>
</dbReference>
<dbReference type="PANTHER" id="PTHR43499:SF1">
    <property type="entry name" value="ABC TRANSPORTER I FAMILY MEMBER 1"/>
    <property type="match status" value="1"/>
</dbReference>
<dbReference type="Pfam" id="PF00005">
    <property type="entry name" value="ABC_tran"/>
    <property type="match status" value="1"/>
</dbReference>
<dbReference type="SMART" id="SM00382">
    <property type="entry name" value="AAA"/>
    <property type="match status" value="1"/>
</dbReference>
<dbReference type="SUPFAM" id="SSF52540">
    <property type="entry name" value="P-loop containing nucleoside triphosphate hydrolases"/>
    <property type="match status" value="1"/>
</dbReference>
<dbReference type="PROSITE" id="PS00211">
    <property type="entry name" value="ABC_TRANSPORTER_1"/>
    <property type="match status" value="1"/>
</dbReference>
<dbReference type="PROSITE" id="PS50893">
    <property type="entry name" value="ABC_TRANSPORTER_2"/>
    <property type="match status" value="1"/>
</dbReference>
<dbReference type="PROSITE" id="PS51243">
    <property type="entry name" value="CCMA"/>
    <property type="match status" value="1"/>
</dbReference>
<protein>
    <recommendedName>
        <fullName evidence="1">Cytochrome c biogenesis ATP-binding export protein CcmA</fullName>
        <ecNumber evidence="1">7.6.2.5</ecNumber>
    </recommendedName>
    <alternativeName>
        <fullName evidence="1">Heme exporter protein A</fullName>
    </alternativeName>
</protein>
<evidence type="ECO:0000255" key="1">
    <source>
        <dbReference type="HAMAP-Rule" id="MF_01707"/>
    </source>
</evidence>
<name>CCMA_PSEU2</name>
<gene>
    <name evidence="1" type="primary">ccmA</name>
    <name type="ordered locus">Psyr_3393</name>
</gene>